<dbReference type="EC" id="4.1.2.-" evidence="2"/>
<dbReference type="EMBL" id="CP000285">
    <property type="protein sequence ID" value="ABE59864.1"/>
    <property type="molecule type" value="Genomic_DNA"/>
</dbReference>
<dbReference type="RefSeq" id="WP_011507810.1">
    <property type="nucleotide sequence ID" value="NC_007963.1"/>
</dbReference>
<dbReference type="SMR" id="Q1QUJ4"/>
<dbReference type="STRING" id="290398.Csal_2517"/>
<dbReference type="GeneID" id="95335221"/>
<dbReference type="KEGG" id="csa:Csal_2517"/>
<dbReference type="eggNOG" id="COG3836">
    <property type="taxonomic scope" value="Bacteria"/>
</dbReference>
<dbReference type="HOGENOM" id="CLU_059964_1_0_6"/>
<dbReference type="OrthoDB" id="86160at2"/>
<dbReference type="Proteomes" id="UP000000239">
    <property type="component" value="Chromosome"/>
</dbReference>
<dbReference type="GO" id="GO:0005737">
    <property type="term" value="C:cytoplasm"/>
    <property type="evidence" value="ECO:0007669"/>
    <property type="project" value="TreeGrafter"/>
</dbReference>
<dbReference type="GO" id="GO:0016832">
    <property type="term" value="F:aldehyde-lyase activity"/>
    <property type="evidence" value="ECO:0007669"/>
    <property type="project" value="TreeGrafter"/>
</dbReference>
<dbReference type="GO" id="GO:0046872">
    <property type="term" value="F:metal ion binding"/>
    <property type="evidence" value="ECO:0007669"/>
    <property type="project" value="UniProtKB-KW"/>
</dbReference>
<dbReference type="FunFam" id="3.20.20.60:FF:000004">
    <property type="entry name" value="5-keto-4-deoxy-D-glucarate aldolase"/>
    <property type="match status" value="1"/>
</dbReference>
<dbReference type="Gene3D" id="3.20.20.60">
    <property type="entry name" value="Phosphoenolpyruvate-binding domains"/>
    <property type="match status" value="1"/>
</dbReference>
<dbReference type="InterPro" id="IPR005000">
    <property type="entry name" value="Aldolase/citrate-lyase_domain"/>
</dbReference>
<dbReference type="InterPro" id="IPR050251">
    <property type="entry name" value="HpcH-HpaI_aldolase"/>
</dbReference>
<dbReference type="InterPro" id="IPR015813">
    <property type="entry name" value="Pyrv/PenolPyrv_kinase-like_dom"/>
</dbReference>
<dbReference type="InterPro" id="IPR040442">
    <property type="entry name" value="Pyrv_kinase-like_dom_sf"/>
</dbReference>
<dbReference type="PANTHER" id="PTHR30502">
    <property type="entry name" value="2-KETO-3-DEOXY-L-RHAMNONATE ALDOLASE"/>
    <property type="match status" value="1"/>
</dbReference>
<dbReference type="PANTHER" id="PTHR30502:SF4">
    <property type="entry name" value="5-KETO-4-DEOXY-D-GLUCARATE ALDOLASE"/>
    <property type="match status" value="1"/>
</dbReference>
<dbReference type="Pfam" id="PF03328">
    <property type="entry name" value="HpcH_HpaI"/>
    <property type="match status" value="1"/>
</dbReference>
<dbReference type="SUPFAM" id="SSF51621">
    <property type="entry name" value="Phosphoenolpyruvate/pyruvate domain"/>
    <property type="match status" value="1"/>
</dbReference>
<reference key="1">
    <citation type="journal article" date="2011" name="Stand. Genomic Sci.">
        <title>Complete genome sequence of the halophilic and highly halotolerant Chromohalobacter salexigens type strain (1H11(T)).</title>
        <authorList>
            <person name="Copeland A."/>
            <person name="O'Connor K."/>
            <person name="Lucas S."/>
            <person name="Lapidus A."/>
            <person name="Berry K.W."/>
            <person name="Detter J.C."/>
            <person name="Del Rio T.G."/>
            <person name="Hammon N."/>
            <person name="Dalin E."/>
            <person name="Tice H."/>
            <person name="Pitluck S."/>
            <person name="Bruce D."/>
            <person name="Goodwin L."/>
            <person name="Han C."/>
            <person name="Tapia R."/>
            <person name="Saunders E."/>
            <person name="Schmutz J."/>
            <person name="Brettin T."/>
            <person name="Larimer F."/>
            <person name="Land M."/>
            <person name="Hauser L."/>
            <person name="Vargas C."/>
            <person name="Nieto J.J."/>
            <person name="Kyrpides N.C."/>
            <person name="Ivanova N."/>
            <person name="Goker M."/>
            <person name="Klenk H.P."/>
            <person name="Csonka L.N."/>
            <person name="Woyke T."/>
        </authorList>
    </citation>
    <scope>NUCLEOTIDE SEQUENCE [LARGE SCALE GENOMIC DNA]</scope>
    <source>
        <strain>ATCC BAA-138 / DSM 3043 / CIP 106854 / NCIMB 13768 / 1H11</strain>
    </source>
</reference>
<reference key="2">
    <citation type="journal article" date="2017" name="Green Chem.">
        <title>Expanding the reaction space of aldolases using hydroxypyruvate as a nucleophilic substrate.</title>
        <authorList>
            <person name="de Berardinis V."/>
            <person name="Guerard-Helaine C."/>
            <person name="Darii E."/>
            <person name="Bastard K."/>
            <person name="Helaine V."/>
            <person name="Mariage A."/>
            <person name="Petit J.-L."/>
            <person name="Poupard N."/>
            <person name="Sanchez-Moreno I."/>
            <person name="Stam M."/>
            <person name="Gefflaut T."/>
            <person name="Salanoubat M."/>
            <person name="Lemaire M."/>
        </authorList>
    </citation>
    <scope>FUNCTION</scope>
    <scope>CATALYTIC ACTIVITY</scope>
</reference>
<feature type="chain" id="PRO_0000460948" description="Hydroxypyruvate/pyruvate aldolase">
    <location>
        <begin position="1"/>
        <end position="254"/>
    </location>
</feature>
<feature type="active site" description="Proton acceptor" evidence="1">
    <location>
        <position position="47"/>
    </location>
</feature>
<feature type="binding site" evidence="1">
    <location>
        <position position="151"/>
    </location>
    <ligand>
        <name>a divalent metal cation</name>
        <dbReference type="ChEBI" id="CHEBI:60240"/>
    </ligand>
</feature>
<feature type="binding site" evidence="1">
    <location>
        <position position="177"/>
    </location>
    <ligand>
        <name>a divalent metal cation</name>
        <dbReference type="ChEBI" id="CHEBI:60240"/>
    </ligand>
</feature>
<feature type="site" description="Transition state stabilizer" evidence="1">
    <location>
        <position position="72"/>
    </location>
</feature>
<feature type="site" description="Increases basicity of active site His" evidence="1">
    <location>
        <position position="86"/>
    </location>
</feature>
<proteinExistence type="evidence at protein level"/>
<protein>
    <recommendedName>
        <fullName evidence="3">Hydroxypyruvate/pyruvate aldolase</fullName>
        <shortName evidence="3">HPA/PA aldolase</shortName>
        <ecNumber evidence="2">4.1.2.-</ecNumber>
    </recommendedName>
</protein>
<name>HPAAL_CHRSD</name>
<organism>
    <name type="scientific">Chromohalobacter salexigens (strain ATCC BAA-138 / DSM 3043 / CIP 106854 / NCIMB 13768 / 1H11)</name>
    <dbReference type="NCBI Taxonomy" id="290398"/>
    <lineage>
        <taxon>Bacteria</taxon>
        <taxon>Pseudomonadati</taxon>
        <taxon>Pseudomonadota</taxon>
        <taxon>Gammaproteobacteria</taxon>
        <taxon>Oceanospirillales</taxon>
        <taxon>Halomonadaceae</taxon>
        <taxon>Chromohalobacter</taxon>
    </lineage>
</organism>
<evidence type="ECO:0000250" key="1">
    <source>
        <dbReference type="UniProtKB" id="Q47098"/>
    </source>
</evidence>
<evidence type="ECO:0000269" key="2">
    <source ref="2"/>
</evidence>
<evidence type="ECO:0000303" key="3">
    <source ref="2"/>
</evidence>
<evidence type="ECO:0000305" key="4"/>
<evidence type="ECO:0000312" key="5">
    <source>
        <dbReference type="EMBL" id="ABE59864.1"/>
    </source>
</evidence>
<sequence length="254" mass="27076">MQLPRNPFKAALDGDTRYGCWAGFATGYAAEILATTGFDWLLIDGEHAPNIVPTTLAQLQALAAYPCAPVVRTVNHDPALIKQLLDIGTQTLMIPMVDTAEQAAQLVAATRYPPHGFRGVGGGLTRATRWGAVEDYMAQAHEELCLIVQVESRSGVDNAEAIAATPGVDAIFVGPFDLSTETGHIGDPTHPEVQAMIRHTLDATHAAGKAAGILAPAEADARRYAQWGFDFIAVGIDISLLRQAAMETVSRYKG</sequence>
<gene>
    <name evidence="5" type="ordered locus">Csal_2517</name>
</gene>
<accession>Q1QUJ4</accession>
<keyword id="KW-0456">Lyase</keyword>
<keyword id="KW-0479">Metal-binding</keyword>
<keyword id="KW-0670">Pyruvate</keyword>
<keyword id="KW-1185">Reference proteome</keyword>
<comment type="function">
    <text evidence="2">Aldolase which can catalyze in vitro the aldolisation reaction between hydroxypyruvate (HPA) or pyruvate (PA) and D-glyceraldehyde (D-GA) (Ref.2). The condensation of pyruvate and D-glyceraldehyde produces 2-dehydro-3-deoxy-L-galactonate as the major product (Ref.2). Has weak activity with hydroxypyruvate and D-glyceraldehyde (Ref.2).</text>
</comment>
<comment type="catalytic activity">
    <reaction evidence="2">
        <text>D-glyceraldehyde + pyruvate = 2-dehydro-3-deoxy-L-galactonate</text>
        <dbReference type="Rhea" id="RHEA:80055"/>
        <dbReference type="ChEBI" id="CHEBI:15361"/>
        <dbReference type="ChEBI" id="CHEBI:17378"/>
        <dbReference type="ChEBI" id="CHEBI:75545"/>
    </reaction>
</comment>
<comment type="cofactor">
    <cofactor evidence="1">
        <name>a divalent metal cation</name>
        <dbReference type="ChEBI" id="CHEBI:60240"/>
    </cofactor>
</comment>
<comment type="similarity">
    <text evidence="4">Belongs to the HpcH/HpaI aldolase family.</text>
</comment>